<accession>Q3M9K5</accession>
<gene>
    <name evidence="1" type="primary">nadK1</name>
    <name type="ordered locus">Ava_2718</name>
</gene>
<keyword id="KW-0067">ATP-binding</keyword>
<keyword id="KW-0963">Cytoplasm</keyword>
<keyword id="KW-0418">Kinase</keyword>
<keyword id="KW-0520">NAD</keyword>
<keyword id="KW-0521">NADP</keyword>
<keyword id="KW-0547">Nucleotide-binding</keyword>
<keyword id="KW-0808">Transferase</keyword>
<protein>
    <recommendedName>
        <fullName evidence="1">NAD kinase 1</fullName>
        <ecNumber evidence="1">2.7.1.23</ecNumber>
    </recommendedName>
    <alternativeName>
        <fullName evidence="1">ATP-dependent NAD kinase 1</fullName>
    </alternativeName>
</protein>
<proteinExistence type="inferred from homology"/>
<organism>
    <name type="scientific">Trichormus variabilis (strain ATCC 29413 / PCC 7937)</name>
    <name type="common">Anabaena variabilis</name>
    <dbReference type="NCBI Taxonomy" id="240292"/>
    <lineage>
        <taxon>Bacteria</taxon>
        <taxon>Bacillati</taxon>
        <taxon>Cyanobacteriota</taxon>
        <taxon>Cyanophyceae</taxon>
        <taxon>Nostocales</taxon>
        <taxon>Nostocaceae</taxon>
        <taxon>Trichormus</taxon>
    </lineage>
</organism>
<feature type="chain" id="PRO_0000229597" description="NAD kinase 1">
    <location>
        <begin position="1"/>
        <end position="306"/>
    </location>
</feature>
<feature type="active site" description="Proton acceptor" evidence="1">
    <location>
        <position position="67"/>
    </location>
</feature>
<feature type="binding site" evidence="1">
    <location>
        <begin position="67"/>
        <end position="68"/>
    </location>
    <ligand>
        <name>NAD(+)</name>
        <dbReference type="ChEBI" id="CHEBI:57540"/>
    </ligand>
</feature>
<feature type="binding site" evidence="1">
    <location>
        <begin position="149"/>
        <end position="150"/>
    </location>
    <ligand>
        <name>NAD(+)</name>
        <dbReference type="ChEBI" id="CHEBI:57540"/>
    </ligand>
</feature>
<feature type="binding site" evidence="1">
    <location>
        <position position="181"/>
    </location>
    <ligand>
        <name>NAD(+)</name>
        <dbReference type="ChEBI" id="CHEBI:57540"/>
    </ligand>
</feature>
<feature type="binding site" evidence="1">
    <location>
        <begin position="192"/>
        <end position="197"/>
    </location>
    <ligand>
        <name>NAD(+)</name>
        <dbReference type="ChEBI" id="CHEBI:57540"/>
    </ligand>
</feature>
<evidence type="ECO:0000255" key="1">
    <source>
        <dbReference type="HAMAP-Rule" id="MF_00361"/>
    </source>
</evidence>
<reference key="1">
    <citation type="journal article" date="2014" name="Stand. Genomic Sci.">
        <title>Complete genome sequence of Anabaena variabilis ATCC 29413.</title>
        <authorList>
            <person name="Thiel T."/>
            <person name="Pratte B.S."/>
            <person name="Zhong J."/>
            <person name="Goodwin L."/>
            <person name="Copeland A."/>
            <person name="Lucas S."/>
            <person name="Han C."/>
            <person name="Pitluck S."/>
            <person name="Land M.L."/>
            <person name="Kyrpides N.C."/>
            <person name="Woyke T."/>
        </authorList>
    </citation>
    <scope>NUCLEOTIDE SEQUENCE [LARGE SCALE GENOMIC DNA]</scope>
    <source>
        <strain>ATCC 29413 / PCC 7937</strain>
    </source>
</reference>
<dbReference type="EC" id="2.7.1.23" evidence="1"/>
<dbReference type="EMBL" id="CP000117">
    <property type="protein sequence ID" value="ABA22331.1"/>
    <property type="molecule type" value="Genomic_DNA"/>
</dbReference>
<dbReference type="RefSeq" id="WP_010994404.1">
    <property type="nucleotide sequence ID" value="NC_007413.1"/>
</dbReference>
<dbReference type="SMR" id="Q3M9K5"/>
<dbReference type="STRING" id="240292.Ava_2718"/>
<dbReference type="KEGG" id="ava:Ava_2718"/>
<dbReference type="eggNOG" id="COG0061">
    <property type="taxonomic scope" value="Bacteria"/>
</dbReference>
<dbReference type="HOGENOM" id="CLU_008831_0_1_3"/>
<dbReference type="Proteomes" id="UP000002533">
    <property type="component" value="Chromosome"/>
</dbReference>
<dbReference type="GO" id="GO:0005737">
    <property type="term" value="C:cytoplasm"/>
    <property type="evidence" value="ECO:0007669"/>
    <property type="project" value="UniProtKB-SubCell"/>
</dbReference>
<dbReference type="GO" id="GO:0005524">
    <property type="term" value="F:ATP binding"/>
    <property type="evidence" value="ECO:0007669"/>
    <property type="project" value="UniProtKB-KW"/>
</dbReference>
<dbReference type="GO" id="GO:0046872">
    <property type="term" value="F:metal ion binding"/>
    <property type="evidence" value="ECO:0007669"/>
    <property type="project" value="UniProtKB-UniRule"/>
</dbReference>
<dbReference type="GO" id="GO:0051287">
    <property type="term" value="F:NAD binding"/>
    <property type="evidence" value="ECO:0007669"/>
    <property type="project" value="UniProtKB-ARBA"/>
</dbReference>
<dbReference type="GO" id="GO:0003951">
    <property type="term" value="F:NAD+ kinase activity"/>
    <property type="evidence" value="ECO:0007669"/>
    <property type="project" value="UniProtKB-UniRule"/>
</dbReference>
<dbReference type="GO" id="GO:0019674">
    <property type="term" value="P:NAD metabolic process"/>
    <property type="evidence" value="ECO:0007669"/>
    <property type="project" value="InterPro"/>
</dbReference>
<dbReference type="GO" id="GO:0006741">
    <property type="term" value="P:NADP biosynthetic process"/>
    <property type="evidence" value="ECO:0007669"/>
    <property type="project" value="UniProtKB-UniRule"/>
</dbReference>
<dbReference type="Gene3D" id="3.40.50.10330">
    <property type="entry name" value="Probable inorganic polyphosphate/atp-NAD kinase, domain 1"/>
    <property type="match status" value="1"/>
</dbReference>
<dbReference type="Gene3D" id="2.60.200.30">
    <property type="entry name" value="Probable inorganic polyphosphate/atp-NAD kinase, domain 2"/>
    <property type="match status" value="1"/>
</dbReference>
<dbReference type="HAMAP" id="MF_00361">
    <property type="entry name" value="NAD_kinase"/>
    <property type="match status" value="1"/>
</dbReference>
<dbReference type="InterPro" id="IPR017438">
    <property type="entry name" value="ATP-NAD_kinase_N"/>
</dbReference>
<dbReference type="InterPro" id="IPR017437">
    <property type="entry name" value="ATP-NAD_kinase_PpnK-typ_C"/>
</dbReference>
<dbReference type="InterPro" id="IPR016064">
    <property type="entry name" value="NAD/diacylglycerol_kinase_sf"/>
</dbReference>
<dbReference type="InterPro" id="IPR002504">
    <property type="entry name" value="NADK"/>
</dbReference>
<dbReference type="NCBIfam" id="NF002731">
    <property type="entry name" value="PRK02645.1"/>
    <property type="match status" value="1"/>
</dbReference>
<dbReference type="PANTHER" id="PTHR20275">
    <property type="entry name" value="NAD KINASE"/>
    <property type="match status" value="1"/>
</dbReference>
<dbReference type="PANTHER" id="PTHR20275:SF0">
    <property type="entry name" value="NAD KINASE"/>
    <property type="match status" value="1"/>
</dbReference>
<dbReference type="Pfam" id="PF01513">
    <property type="entry name" value="NAD_kinase"/>
    <property type="match status" value="1"/>
</dbReference>
<dbReference type="Pfam" id="PF20143">
    <property type="entry name" value="NAD_kinase_C"/>
    <property type="match status" value="1"/>
</dbReference>
<dbReference type="SUPFAM" id="SSF111331">
    <property type="entry name" value="NAD kinase/diacylglycerol kinase-like"/>
    <property type="match status" value="1"/>
</dbReference>
<name>NADK1_TRIV2</name>
<comment type="function">
    <text evidence="1">Involved in the regulation of the intracellular balance of NAD and NADP, and is a key enzyme in the biosynthesis of NADP. Catalyzes specifically the phosphorylation on 2'-hydroxyl of the adenosine moiety of NAD to yield NADP.</text>
</comment>
<comment type="catalytic activity">
    <reaction evidence="1">
        <text>NAD(+) + ATP = ADP + NADP(+) + H(+)</text>
        <dbReference type="Rhea" id="RHEA:18629"/>
        <dbReference type="ChEBI" id="CHEBI:15378"/>
        <dbReference type="ChEBI" id="CHEBI:30616"/>
        <dbReference type="ChEBI" id="CHEBI:57540"/>
        <dbReference type="ChEBI" id="CHEBI:58349"/>
        <dbReference type="ChEBI" id="CHEBI:456216"/>
        <dbReference type="EC" id="2.7.1.23"/>
    </reaction>
</comment>
<comment type="cofactor">
    <cofactor evidence="1">
        <name>a divalent metal cation</name>
        <dbReference type="ChEBI" id="CHEBI:60240"/>
    </cofactor>
</comment>
<comment type="subcellular location">
    <subcellularLocation>
        <location evidence="1">Cytoplasm</location>
    </subcellularLocation>
</comment>
<comment type="similarity">
    <text evidence="1">Belongs to the NAD kinase family.</text>
</comment>
<sequence length="306" mass="33933">MQLKQVIIAYKARDSQSKRWAELCAKQLENRNCQVLMGPSGPKDNPYPVFLASASQPIDLAIVLGGDGTVLTSARHLAPAGIPILGVNVGGHLGFLTESVDEFQDTEKVWDRLFEDRYAIQRRMMLQAAVYEGHRTNLEPVTERYLGLNEFCVKPASADRMITSILEMEIDGEVVDQYVGDGLIISTPTGSTGYTVSASGPIMHDGMEAITITPICPMSLSSRPLILPAGSVVSIWPLGDYDLSTKLWMDGVLATSIWPAHRVDIRMADCRAKFIVLRENNSYYQTLREKLLWAGTRVRYTSTQHN</sequence>